<comment type="function">
    <text evidence="4">Pseudokinase which plays a role in resistance to fungal infection by promoting expression of antimicrobial peptides (nlp-29, nlp-31, nlp-34, cnc-1, cnc-2 and cnc-4) in the epidermis. In addition, up-regulates nlp-29 expression upon physical wounding and in response to phorbol ester PMA treatment.</text>
</comment>
<comment type="subcellular location">
    <subcellularLocation>
        <location evidence="1">Membrane</location>
        <topology evidence="1">Single-pass membrane protein</topology>
    </subcellularLocation>
</comment>
<comment type="tissue specificity">
    <text evidence="4">Expressed in the epidermis of larvae and adults and in vulval and rectal cells.</text>
</comment>
<comment type="domain">
    <text evidence="2">The protein kinase domain is predicted to be catalytically inactive.</text>
</comment>
<comment type="similarity">
    <text evidence="5">Belongs to the protein kinase superfamily. Tyr protein kinase family.</text>
</comment>
<evidence type="ECO:0000255" key="1"/>
<evidence type="ECO:0000255" key="2">
    <source>
        <dbReference type="PROSITE-ProRule" id="PRU00159"/>
    </source>
</evidence>
<evidence type="ECO:0000255" key="3">
    <source>
        <dbReference type="PROSITE-ProRule" id="PRU00498"/>
    </source>
</evidence>
<evidence type="ECO:0000269" key="4">
    <source>
    </source>
</evidence>
<evidence type="ECO:0000305" key="5"/>
<evidence type="ECO:0000312" key="6">
    <source>
        <dbReference type="Proteomes" id="UP000001940"/>
    </source>
</evidence>
<evidence type="ECO:0000312" key="7">
    <source>
        <dbReference type="WormBase" id="F40A3.5"/>
    </source>
</evidence>
<protein>
    <recommendedName>
        <fullName evidence="5">Protein nipi-4</fullName>
    </recommendedName>
    <alternativeName>
        <fullName evidence="7">No induction of peptide after drechmeria infection protein 4</fullName>
    </alternativeName>
</protein>
<feature type="chain" id="PRO_0000433880" description="Protein nipi-4" evidence="5">
    <location>
        <begin position="1"/>
        <end position="396"/>
    </location>
</feature>
<feature type="topological domain" description="Extracellular" evidence="1">
    <location>
        <begin position="1"/>
        <end position="20"/>
    </location>
</feature>
<feature type="transmembrane region" description="Helical" evidence="1">
    <location>
        <begin position="21"/>
        <end position="41"/>
    </location>
</feature>
<feature type="topological domain" description="Cytoplasmic" evidence="1">
    <location>
        <begin position="42"/>
        <end position="396"/>
    </location>
</feature>
<feature type="domain" description="Protein kinase" evidence="2">
    <location>
        <begin position="81"/>
        <end position="368"/>
    </location>
</feature>
<feature type="binding site" evidence="2">
    <location>
        <begin position="87"/>
        <end position="95"/>
    </location>
    <ligand>
        <name>ATP</name>
        <dbReference type="ChEBI" id="CHEBI:30616"/>
    </ligand>
</feature>
<feature type="binding site" evidence="2">
    <location>
        <position position="111"/>
    </location>
    <ligand>
        <name>ATP</name>
        <dbReference type="ChEBI" id="CHEBI:30616"/>
    </ligand>
</feature>
<feature type="glycosylation site" description="N-linked (GlcNAc...) asparagine" evidence="3">
    <location>
        <position position="15"/>
    </location>
</feature>
<feature type="mutagenesis site" description="In fr68; severe loss of nlp-29 expression upon D.coniospora infection." evidence="4">
    <original>G</original>
    <variation>E</variation>
    <location>
        <position position="299"/>
    </location>
</feature>
<name>NIPI4_CAEEL</name>
<dbReference type="EMBL" id="BX284605">
    <property type="protein sequence ID" value="CCD66964.1"/>
    <property type="molecule type" value="Genomic_DNA"/>
</dbReference>
<dbReference type="RefSeq" id="NP_505028.3">
    <property type="nucleotide sequence ID" value="NM_072627.5"/>
</dbReference>
<dbReference type="SMR" id="O16262"/>
<dbReference type="FunCoup" id="O16262">
    <property type="interactions" value="6"/>
</dbReference>
<dbReference type="STRING" id="6239.F40A3.5.1"/>
<dbReference type="GlyCosmos" id="O16262">
    <property type="glycosylation" value="1 site, No reported glycans"/>
</dbReference>
<dbReference type="PaxDb" id="6239-F40A3.5"/>
<dbReference type="PeptideAtlas" id="O16262"/>
<dbReference type="EnsemblMetazoa" id="F40A3.5.1">
    <property type="protein sequence ID" value="F40A3.5.1"/>
    <property type="gene ID" value="WBGene00077712"/>
</dbReference>
<dbReference type="EnsemblMetazoa" id="F40A3.5.2">
    <property type="protein sequence ID" value="F40A3.5.2"/>
    <property type="gene ID" value="WBGene00077712"/>
</dbReference>
<dbReference type="GeneID" id="179167"/>
<dbReference type="KEGG" id="cel:CELE_F40A3.5"/>
<dbReference type="UCSC" id="F40A3.5">
    <property type="organism name" value="c. elegans"/>
</dbReference>
<dbReference type="AGR" id="WB:WBGene00077712"/>
<dbReference type="CTD" id="179167"/>
<dbReference type="WormBase" id="F40A3.5">
    <property type="protein sequence ID" value="CE44387"/>
    <property type="gene ID" value="WBGene00077712"/>
    <property type="gene designation" value="nipi-4"/>
</dbReference>
<dbReference type="eggNOG" id="KOG1025">
    <property type="taxonomic scope" value="Eukaryota"/>
</dbReference>
<dbReference type="GeneTree" id="ENSGT00940000168088"/>
<dbReference type="HOGENOM" id="CLU_700648_0_0_1"/>
<dbReference type="InParanoid" id="O16262"/>
<dbReference type="OMA" id="EPHYQRT"/>
<dbReference type="OrthoDB" id="4062651at2759"/>
<dbReference type="PhylomeDB" id="O16262"/>
<dbReference type="Reactome" id="R-CEL-8847993">
    <property type="pathway name" value="ERBB2 Activates PTK6 Signaling"/>
</dbReference>
<dbReference type="Reactome" id="R-CEL-8849468">
    <property type="pathway name" value="PTK6 Regulates Proteins Involved in RNA Processing"/>
</dbReference>
<dbReference type="Reactome" id="R-CEL-8849469">
    <property type="pathway name" value="PTK6 Regulates RTKs and Their Effectors AKT1 and DOK1"/>
</dbReference>
<dbReference type="Reactome" id="R-CEL-8849471">
    <property type="pathway name" value="PTK6 Regulates RHO GTPases, RAS GTPase and MAP kinases"/>
</dbReference>
<dbReference type="Reactome" id="R-CEL-8849472">
    <property type="pathway name" value="PTK6 Down-Regulation"/>
</dbReference>
<dbReference type="PRO" id="PR:O16262"/>
<dbReference type="Proteomes" id="UP000001940">
    <property type="component" value="Chromosome V"/>
</dbReference>
<dbReference type="Bgee" id="WBGene00077712">
    <property type="expression patterns" value="Expressed in embryo and 3 other cell types or tissues"/>
</dbReference>
<dbReference type="GO" id="GO:0005886">
    <property type="term" value="C:plasma membrane"/>
    <property type="evidence" value="ECO:0000318"/>
    <property type="project" value="GO_Central"/>
</dbReference>
<dbReference type="GO" id="GO:0005524">
    <property type="term" value="F:ATP binding"/>
    <property type="evidence" value="ECO:0007669"/>
    <property type="project" value="UniProtKB-KW"/>
</dbReference>
<dbReference type="GO" id="GO:0004672">
    <property type="term" value="F:protein kinase activity"/>
    <property type="evidence" value="ECO:0007669"/>
    <property type="project" value="InterPro"/>
</dbReference>
<dbReference type="GO" id="GO:0050832">
    <property type="term" value="P:defense response to fungus"/>
    <property type="evidence" value="ECO:0000315"/>
    <property type="project" value="UniProtKB"/>
</dbReference>
<dbReference type="GO" id="GO:0010628">
    <property type="term" value="P:positive regulation of gene expression"/>
    <property type="evidence" value="ECO:0000315"/>
    <property type="project" value="UniProtKB"/>
</dbReference>
<dbReference type="GO" id="GO:0009611">
    <property type="term" value="P:response to wounding"/>
    <property type="evidence" value="ECO:0000315"/>
    <property type="project" value="UniProtKB"/>
</dbReference>
<dbReference type="FunFam" id="1.10.510.10:FF:001433">
    <property type="entry name" value="Protein CBG20555"/>
    <property type="match status" value="1"/>
</dbReference>
<dbReference type="Gene3D" id="3.30.200.20">
    <property type="entry name" value="Phosphorylase Kinase, domain 1"/>
    <property type="match status" value="1"/>
</dbReference>
<dbReference type="Gene3D" id="1.10.510.10">
    <property type="entry name" value="Transferase(Phosphotransferase) domain 1"/>
    <property type="match status" value="1"/>
</dbReference>
<dbReference type="InterPro" id="IPR011009">
    <property type="entry name" value="Kinase-like_dom_sf"/>
</dbReference>
<dbReference type="InterPro" id="IPR000719">
    <property type="entry name" value="Prot_kinase_dom"/>
</dbReference>
<dbReference type="InterPro" id="IPR050122">
    <property type="entry name" value="RTK"/>
</dbReference>
<dbReference type="InterPro" id="IPR001245">
    <property type="entry name" value="Ser-Thr/Tyr_kinase_cat_dom"/>
</dbReference>
<dbReference type="PANTHER" id="PTHR24416">
    <property type="entry name" value="TYROSINE-PROTEIN KINASE RECEPTOR"/>
    <property type="match status" value="1"/>
</dbReference>
<dbReference type="PANTHER" id="PTHR24416:SF611">
    <property type="entry name" value="TYROSINE-PROTEIN KINASE TRANSMEMBRANE RECEPTOR ROR"/>
    <property type="match status" value="1"/>
</dbReference>
<dbReference type="Pfam" id="PF07714">
    <property type="entry name" value="PK_Tyr_Ser-Thr"/>
    <property type="match status" value="1"/>
</dbReference>
<dbReference type="SUPFAM" id="SSF56112">
    <property type="entry name" value="Protein kinase-like (PK-like)"/>
    <property type="match status" value="1"/>
</dbReference>
<dbReference type="PROSITE" id="PS50011">
    <property type="entry name" value="PROTEIN_KINASE_DOM"/>
    <property type="match status" value="1"/>
</dbReference>
<reference evidence="5" key="1">
    <citation type="journal article" date="2012" name="PLoS ONE">
        <title>The pseudokinase NIPI-4 is a novel regulator of antimicrobial peptide gene expression.</title>
        <authorList>
            <person name="Labed S.A."/>
            <person name="Omi S."/>
            <person name="Gut M."/>
            <person name="Ewbank J.J."/>
            <person name="Pujol N."/>
        </authorList>
    </citation>
    <scope>NUCLEOTIDE SEQUENCE [MRNA]</scope>
    <scope>FUNCTION</scope>
    <scope>TISSUE SPECIFICITY</scope>
    <scope>MUTAGENESIS OF GLY-299</scope>
</reference>
<reference evidence="6" key="2">
    <citation type="journal article" date="1998" name="Science">
        <title>Genome sequence of the nematode C. elegans: a platform for investigating biology.</title>
        <authorList>
            <consortium name="The C. elegans sequencing consortium"/>
        </authorList>
    </citation>
    <scope>NUCLEOTIDE SEQUENCE [LARGE SCALE GENOMIC DNA]</scope>
    <source>
        <strain evidence="6">Bristol N2</strain>
    </source>
</reference>
<organism evidence="6">
    <name type="scientific">Caenorhabditis elegans</name>
    <dbReference type="NCBI Taxonomy" id="6239"/>
    <lineage>
        <taxon>Eukaryota</taxon>
        <taxon>Metazoa</taxon>
        <taxon>Ecdysozoa</taxon>
        <taxon>Nematoda</taxon>
        <taxon>Chromadorea</taxon>
        <taxon>Rhabditida</taxon>
        <taxon>Rhabditina</taxon>
        <taxon>Rhabditomorpha</taxon>
        <taxon>Rhabditoidea</taxon>
        <taxon>Rhabditidae</taxon>
        <taxon>Peloderinae</taxon>
        <taxon>Caenorhabditis</taxon>
    </lineage>
</organism>
<proteinExistence type="evidence at protein level"/>
<sequence>MELDHTPPPSVLNDNCSASYMTPYATVIAMSGLYLLAIFYFCKKSKKMCQPMSDSIYPYQKRLTQLERELKNYLIDEESIEVDDFQIGQTADGFIFRGGVFPKTRNRFNAKVTTAVKISFPIVSKSISLLEDALRLSKLDHPNLIRLLAVSQLSFTVFRPMIALEWLPGGTLADYFQFKVREKDDSERSPIQLKDMLSILYQVSQALKYIHSQLDEFGQELTHGRIFTRNVLVTEPDLRKCEVKLGDFGDAPMGLEYSTPIIAYMPPEILCCAERIPPHRPENDVWMFGVFIWECLTLGAQPHFRKSVEEIKKSFRLPDRGLSCPPTCPLDVWTLVSDCLSEPHMRPRFASTTNASITSRLSELHHIVSPALFLYAIPNQSVCTCIEHHCQSVIHY</sequence>
<accession>O16262</accession>
<keyword id="KW-0067">ATP-binding</keyword>
<keyword id="KW-0325">Glycoprotein</keyword>
<keyword id="KW-0472">Membrane</keyword>
<keyword id="KW-0547">Nucleotide-binding</keyword>
<keyword id="KW-1185">Reference proteome</keyword>
<keyword id="KW-0812">Transmembrane</keyword>
<keyword id="KW-1133">Transmembrane helix</keyword>
<gene>
    <name evidence="7" type="primary">nipi-4</name>
    <name evidence="7" type="ORF">F40A3.5</name>
</gene>